<protein>
    <recommendedName>
        <fullName evidence="6">Shaggy-related protein kinase GSK1</fullName>
        <ecNumber evidence="6">2.7.11.1</ecNumber>
    </recommendedName>
    <alternativeName>
        <fullName evidence="7">Glycogen synthase kinase3-like protein 1</fullName>
        <shortName evidence="5">OsGSK1</shortName>
    </alternativeName>
    <alternativeName>
        <fullName evidence="6">Shaggy/GSK3-like kinase 21</fullName>
        <shortName evidence="6">OsSK21</shortName>
    </alternativeName>
</protein>
<organism>
    <name type="scientific">Oryza sativa subsp. japonica</name>
    <name type="common">Rice</name>
    <dbReference type="NCBI Taxonomy" id="39947"/>
    <lineage>
        <taxon>Eukaryota</taxon>
        <taxon>Viridiplantae</taxon>
        <taxon>Streptophyta</taxon>
        <taxon>Embryophyta</taxon>
        <taxon>Tracheophyta</taxon>
        <taxon>Spermatophyta</taxon>
        <taxon>Magnoliopsida</taxon>
        <taxon>Liliopsida</taxon>
        <taxon>Poales</taxon>
        <taxon>Poaceae</taxon>
        <taxon>BOP clade</taxon>
        <taxon>Oryzoideae</taxon>
        <taxon>Oryzeae</taxon>
        <taxon>Oryzinae</taxon>
        <taxon>Oryza</taxon>
        <taxon>Oryza sativa</taxon>
    </lineage>
</organism>
<name>GSK1_ORYSJ</name>
<gene>
    <name evidence="5" type="primary">GSK1</name>
    <name evidence="6" type="synonym">SK21</name>
    <name evidence="9" type="ordered locus">Os01g0205700</name>
    <name evidence="6" type="ordered locus">LOC_Os01g10840</name>
    <name evidence="8" type="ORF">P0451C06.26</name>
</gene>
<sequence>MEAPPGPEPMELDAPPPPAAVAAAAATAGISEKVLQKKEEGGGDAVTGHIISTTIGGKNGEPKRTISYMAERVVGTGSFGIVFQAKCLETGETVAIKKVLQDRRYKNRELQLMRAMEHPNVICLKHCFFSTTSRDELFLNLVMEYVPETLYRVLKHYSNANQRMPLIYVKLYIYQLFRGLAYIHTVPGVCHRDVKPQNVLVDPLTHQVKLCDFGSAKVLVPGEPNISYICSRYYRAPELIFGATEYTTSIDIWSAGCVLAELLLGQPLFPGESAVDQLVEIIKVLGTPTREEIRCMNPNYTEFKFPQIKAHPWHKIFHKRMPPEAIDLASRLLQYSPSLRCTALDACAHSFFDELREPNARLPNGRPFPPLFNFKHELASASPELIHRLIPDHIRRQHGLNFAHAGS</sequence>
<evidence type="ECO:0000255" key="1">
    <source>
        <dbReference type="PROSITE-ProRule" id="PRU00159"/>
    </source>
</evidence>
<evidence type="ECO:0000256" key="2">
    <source>
        <dbReference type="SAM" id="MobiDB-lite"/>
    </source>
</evidence>
<evidence type="ECO:0000269" key="3">
    <source>
    </source>
</evidence>
<evidence type="ECO:0000269" key="4">
    <source>
    </source>
</evidence>
<evidence type="ECO:0000303" key="5">
    <source>
    </source>
</evidence>
<evidence type="ECO:0000305" key="6"/>
<evidence type="ECO:0000305" key="7">
    <source>
    </source>
</evidence>
<evidence type="ECO:0000312" key="8">
    <source>
        <dbReference type="EMBL" id="BAA92966.1"/>
    </source>
</evidence>
<evidence type="ECO:0000312" key="9">
    <source>
        <dbReference type="EMBL" id="BAS70941.1"/>
    </source>
</evidence>
<proteinExistence type="evidence at protein level"/>
<comment type="function">
    <text evidence="3 4">Probable serine-threonine kinase that may act as a negative regulator of brassinosteroid (BR) signaling during flower development. May have physiological roles in stress signal-transduction pathways (PubMed:17690841). Phosphorylates LIC in response to BR perception (PubMed:22570626).</text>
</comment>
<comment type="catalytic activity">
    <reaction evidence="6">
        <text>L-seryl-[protein] + ATP = O-phospho-L-seryl-[protein] + ADP + H(+)</text>
        <dbReference type="Rhea" id="RHEA:17989"/>
        <dbReference type="Rhea" id="RHEA-COMP:9863"/>
        <dbReference type="Rhea" id="RHEA-COMP:11604"/>
        <dbReference type="ChEBI" id="CHEBI:15378"/>
        <dbReference type="ChEBI" id="CHEBI:29999"/>
        <dbReference type="ChEBI" id="CHEBI:30616"/>
        <dbReference type="ChEBI" id="CHEBI:83421"/>
        <dbReference type="ChEBI" id="CHEBI:456216"/>
        <dbReference type="EC" id="2.7.11.1"/>
    </reaction>
</comment>
<comment type="catalytic activity">
    <reaction evidence="6">
        <text>L-threonyl-[protein] + ATP = O-phospho-L-threonyl-[protein] + ADP + H(+)</text>
        <dbReference type="Rhea" id="RHEA:46608"/>
        <dbReference type="Rhea" id="RHEA-COMP:11060"/>
        <dbReference type="Rhea" id="RHEA-COMP:11605"/>
        <dbReference type="ChEBI" id="CHEBI:15378"/>
        <dbReference type="ChEBI" id="CHEBI:30013"/>
        <dbReference type="ChEBI" id="CHEBI:30616"/>
        <dbReference type="ChEBI" id="CHEBI:61977"/>
        <dbReference type="ChEBI" id="CHEBI:456216"/>
        <dbReference type="EC" id="2.7.11.1"/>
    </reaction>
</comment>
<comment type="subunit">
    <text evidence="4">Interacts with LIC.</text>
</comment>
<comment type="tissue specificity">
    <text evidence="3">Highly expressed in the entire young panicles, spikelets, awns, vascular bundles of palea and lemma, stigma and rachilla. Expressed in root tips, root hairs, lamina joint in the collar region, vascular bundles of coleoptiles.</text>
</comment>
<comment type="induction">
    <text evidence="4">Induced by cold and salt stresses. Down-regulated by drought stress.</text>
</comment>
<comment type="disruption phenotype">
    <text evidence="3">Increased length of spikelet awns and weight of seeds. Increased sensitivity to brassinolide. Enhanced tolerance to drought, salt, cold and heat stresses.</text>
</comment>
<comment type="similarity">
    <text evidence="6">Belongs to the protein kinase superfamily. CMGC Ser/Thr protein kinase family. GSK-3 subfamily.</text>
</comment>
<comment type="sequence caution" evidence="6">
    <conflict type="erroneous gene model prediction">
        <sequence resource="EMBL-CDS" id="BAF04255"/>
    </conflict>
</comment>
<comment type="sequence caution" evidence="6">
    <conflict type="erroneous gene model prediction">
        <sequence resource="EMBL-CDS" id="BAS70941"/>
    </conflict>
</comment>
<feature type="chain" id="PRO_0000439007" description="Shaggy-related protein kinase GSK1">
    <location>
        <begin position="1"/>
        <end position="407"/>
    </location>
</feature>
<feature type="domain" description="Protein kinase" evidence="1">
    <location>
        <begin position="68"/>
        <end position="352"/>
    </location>
</feature>
<feature type="region of interest" description="Disordered" evidence="2">
    <location>
        <begin position="1"/>
        <end position="21"/>
    </location>
</feature>
<feature type="compositionally biased region" description="Pro residues" evidence="2">
    <location>
        <begin position="1"/>
        <end position="19"/>
    </location>
</feature>
<feature type="active site" description="Proton acceptor" evidence="1">
    <location>
        <position position="193"/>
    </location>
</feature>
<feature type="binding site" evidence="1">
    <location>
        <begin position="74"/>
        <end position="82"/>
    </location>
    <ligand>
        <name>ATP</name>
        <dbReference type="ChEBI" id="CHEBI:30616"/>
    </ligand>
</feature>
<feature type="binding site" evidence="1">
    <location>
        <position position="97"/>
    </location>
    <ligand>
        <name>ATP</name>
        <dbReference type="ChEBI" id="CHEBI:30616"/>
    </ligand>
</feature>
<reference key="1">
    <citation type="journal article" date="2002" name="Nature">
        <title>The genome sequence and structure of rice chromosome 1.</title>
        <authorList>
            <person name="Sasaki T."/>
            <person name="Matsumoto T."/>
            <person name="Yamamoto K."/>
            <person name="Sakata K."/>
            <person name="Baba T."/>
            <person name="Katayose Y."/>
            <person name="Wu J."/>
            <person name="Niimura Y."/>
            <person name="Cheng Z."/>
            <person name="Nagamura Y."/>
            <person name="Antonio B.A."/>
            <person name="Kanamori H."/>
            <person name="Hosokawa S."/>
            <person name="Masukawa M."/>
            <person name="Arikawa K."/>
            <person name="Chiden Y."/>
            <person name="Hayashi M."/>
            <person name="Okamoto M."/>
            <person name="Ando T."/>
            <person name="Aoki H."/>
            <person name="Arita K."/>
            <person name="Hamada M."/>
            <person name="Harada C."/>
            <person name="Hijishita S."/>
            <person name="Honda M."/>
            <person name="Ichikawa Y."/>
            <person name="Idonuma A."/>
            <person name="Iijima M."/>
            <person name="Ikeda M."/>
            <person name="Ikeno M."/>
            <person name="Ito S."/>
            <person name="Ito T."/>
            <person name="Ito Y."/>
            <person name="Ito Y."/>
            <person name="Iwabuchi A."/>
            <person name="Kamiya K."/>
            <person name="Karasawa W."/>
            <person name="Katagiri S."/>
            <person name="Kikuta A."/>
            <person name="Kobayashi N."/>
            <person name="Kono I."/>
            <person name="Machita K."/>
            <person name="Maehara T."/>
            <person name="Mizuno H."/>
            <person name="Mizubayashi T."/>
            <person name="Mukai Y."/>
            <person name="Nagasaki H."/>
            <person name="Nakashima M."/>
            <person name="Nakama Y."/>
            <person name="Nakamichi Y."/>
            <person name="Nakamura M."/>
            <person name="Namiki N."/>
            <person name="Negishi M."/>
            <person name="Ohta I."/>
            <person name="Ono N."/>
            <person name="Saji S."/>
            <person name="Sakai K."/>
            <person name="Shibata M."/>
            <person name="Shimokawa T."/>
            <person name="Shomura A."/>
            <person name="Song J."/>
            <person name="Takazaki Y."/>
            <person name="Terasawa K."/>
            <person name="Tsuji K."/>
            <person name="Waki K."/>
            <person name="Yamagata H."/>
            <person name="Yamane H."/>
            <person name="Yoshiki S."/>
            <person name="Yoshihara R."/>
            <person name="Yukawa K."/>
            <person name="Zhong H."/>
            <person name="Iwama H."/>
            <person name="Endo T."/>
            <person name="Ito H."/>
            <person name="Hahn J.H."/>
            <person name="Kim H.-I."/>
            <person name="Eun M.-Y."/>
            <person name="Yano M."/>
            <person name="Jiang J."/>
            <person name="Gojobori T."/>
        </authorList>
    </citation>
    <scope>NUCLEOTIDE SEQUENCE [LARGE SCALE GENOMIC DNA]</scope>
    <source>
        <strain>cv. Nipponbare</strain>
    </source>
</reference>
<reference key="2">
    <citation type="journal article" date="2005" name="Nature">
        <title>The map-based sequence of the rice genome.</title>
        <authorList>
            <consortium name="International rice genome sequencing project (IRGSP)"/>
        </authorList>
    </citation>
    <scope>NUCLEOTIDE SEQUENCE [LARGE SCALE GENOMIC DNA]</scope>
    <source>
        <strain>cv. Nipponbare</strain>
    </source>
</reference>
<reference key="3">
    <citation type="journal article" date="2008" name="Nucleic Acids Res.">
        <title>The rice annotation project database (RAP-DB): 2008 update.</title>
        <authorList>
            <consortium name="The rice annotation project (RAP)"/>
        </authorList>
    </citation>
    <scope>GENOME REANNOTATION</scope>
    <source>
        <strain>cv. Nipponbare</strain>
    </source>
</reference>
<reference key="4">
    <citation type="journal article" date="2013" name="Rice">
        <title>Improvement of the Oryza sativa Nipponbare reference genome using next generation sequence and optical map data.</title>
        <authorList>
            <person name="Kawahara Y."/>
            <person name="de la Bastide M."/>
            <person name="Hamilton J.P."/>
            <person name="Kanamori H."/>
            <person name="McCombie W.R."/>
            <person name="Ouyang S."/>
            <person name="Schwartz D.C."/>
            <person name="Tanaka T."/>
            <person name="Wu J."/>
            <person name="Zhou S."/>
            <person name="Childs K.L."/>
            <person name="Davidson R.M."/>
            <person name="Lin H."/>
            <person name="Quesada-Ocampo L."/>
            <person name="Vaillancourt B."/>
            <person name="Sakai H."/>
            <person name="Lee S.S."/>
            <person name="Kim J."/>
            <person name="Numa H."/>
            <person name="Itoh T."/>
            <person name="Buell C.R."/>
            <person name="Matsumoto T."/>
        </authorList>
    </citation>
    <scope>GENOME REANNOTATION</scope>
    <source>
        <strain>cv. Nipponbare</strain>
    </source>
</reference>
<reference key="5">
    <citation type="journal article" date="2007" name="Plant Mol. Biol.">
        <title>T-DNA tagged knockout mutation of rice OsGSK1, an orthologue of Arabidopsis BIN2, with enhanced tolerance to various abiotic stresses.</title>
        <authorList>
            <person name="Koh S."/>
            <person name="Lee S.C."/>
            <person name="Kim M.K."/>
            <person name="Koh J.H."/>
            <person name="Lee S."/>
            <person name="An G."/>
            <person name="Choe S."/>
            <person name="Kim S.R."/>
        </authorList>
    </citation>
    <scope>FUNCTION</scope>
    <scope>TISSUE SPECIFICITY</scope>
    <scope>INDUCTION</scope>
    <scope>DISRUPTION PHENOTYPE</scope>
</reference>
<reference key="6">
    <citation type="journal article" date="2012" name="PLoS Genet.">
        <title>Dynamics of brassinosteroid response modulated by negative regulator LIC in rice.</title>
        <authorList>
            <person name="Zhang C."/>
            <person name="Xu Y."/>
            <person name="Guo S."/>
            <person name="Zhu J."/>
            <person name="Huan Q."/>
            <person name="Liu H."/>
            <person name="Wang L."/>
            <person name="Luo G."/>
            <person name="Wang X."/>
            <person name="Chong K."/>
        </authorList>
    </citation>
    <scope>FUNCTION</scope>
    <scope>INTERACTION WITH LIC</scope>
</reference>
<accession>Q9LWN0</accession>
<accession>Q0JPS3</accession>
<keyword id="KW-0067">ATP-binding</keyword>
<keyword id="KW-1070">Brassinosteroid signaling pathway</keyword>
<keyword id="KW-0418">Kinase</keyword>
<keyword id="KW-0547">Nucleotide-binding</keyword>
<keyword id="KW-1185">Reference proteome</keyword>
<keyword id="KW-0723">Serine/threonine-protein kinase</keyword>
<keyword id="KW-0346">Stress response</keyword>
<keyword id="KW-0808">Transferase</keyword>
<dbReference type="EC" id="2.7.11.1" evidence="6"/>
<dbReference type="EMBL" id="AP001551">
    <property type="protein sequence ID" value="BAA92966.1"/>
    <property type="molecule type" value="Genomic_DNA"/>
</dbReference>
<dbReference type="EMBL" id="AP008207">
    <property type="protein sequence ID" value="BAF04255.1"/>
    <property type="status" value="ALT_SEQ"/>
    <property type="molecule type" value="Genomic_DNA"/>
</dbReference>
<dbReference type="EMBL" id="AP014957">
    <property type="protein sequence ID" value="BAS70941.1"/>
    <property type="status" value="ALT_SEQ"/>
    <property type="molecule type" value="Genomic_DNA"/>
</dbReference>
<dbReference type="SMR" id="Q9LWN0"/>
<dbReference type="FunCoup" id="Q9LWN0">
    <property type="interactions" value="2462"/>
</dbReference>
<dbReference type="STRING" id="39947.Q9LWN0"/>
<dbReference type="PaxDb" id="39947-Q9LWN0"/>
<dbReference type="KEGG" id="dosa:Os01g0205700"/>
<dbReference type="eggNOG" id="KOG0658">
    <property type="taxonomic scope" value="Eukaryota"/>
</dbReference>
<dbReference type="InParanoid" id="Q9LWN0"/>
<dbReference type="PlantReactome" id="R-OSA-5632095">
    <property type="pathway name" value="Brassinosteroid signaling"/>
</dbReference>
<dbReference type="Proteomes" id="UP000000763">
    <property type="component" value="Chromosome 1"/>
</dbReference>
<dbReference type="Proteomes" id="UP000059680">
    <property type="component" value="Chromosome 1"/>
</dbReference>
<dbReference type="GO" id="GO:0005737">
    <property type="term" value="C:cytoplasm"/>
    <property type="evidence" value="ECO:0000318"/>
    <property type="project" value="GO_Central"/>
</dbReference>
<dbReference type="GO" id="GO:0005634">
    <property type="term" value="C:nucleus"/>
    <property type="evidence" value="ECO:0000318"/>
    <property type="project" value="GO_Central"/>
</dbReference>
<dbReference type="GO" id="GO:1902911">
    <property type="term" value="C:protein kinase complex"/>
    <property type="evidence" value="ECO:0000314"/>
    <property type="project" value="UniProtKB"/>
</dbReference>
<dbReference type="GO" id="GO:0005524">
    <property type="term" value="F:ATP binding"/>
    <property type="evidence" value="ECO:0007669"/>
    <property type="project" value="UniProtKB-KW"/>
</dbReference>
<dbReference type="GO" id="GO:0106310">
    <property type="term" value="F:protein serine kinase activity"/>
    <property type="evidence" value="ECO:0007669"/>
    <property type="project" value="RHEA"/>
</dbReference>
<dbReference type="GO" id="GO:0004674">
    <property type="term" value="F:protein serine/threonine kinase activity"/>
    <property type="evidence" value="ECO:0000318"/>
    <property type="project" value="GO_Central"/>
</dbReference>
<dbReference type="GO" id="GO:0009742">
    <property type="term" value="P:brassinosteroid mediated signaling pathway"/>
    <property type="evidence" value="ECO:0000318"/>
    <property type="project" value="GO_Central"/>
</dbReference>
<dbReference type="GO" id="GO:0030154">
    <property type="term" value="P:cell differentiation"/>
    <property type="evidence" value="ECO:0000318"/>
    <property type="project" value="GO_Central"/>
</dbReference>
<dbReference type="GO" id="GO:1900458">
    <property type="term" value="P:negative regulation of brassinosteroid mediated signaling pathway"/>
    <property type="evidence" value="ECO:0000315"/>
    <property type="project" value="UniProtKB"/>
</dbReference>
<dbReference type="CDD" id="cd14137">
    <property type="entry name" value="STKc_GSK3"/>
    <property type="match status" value="1"/>
</dbReference>
<dbReference type="FunFam" id="3.30.200.20:FF:000009">
    <property type="entry name" value="Glycogen synthase kinase-3 beta"/>
    <property type="match status" value="1"/>
</dbReference>
<dbReference type="FunFam" id="1.10.510.10:FF:000082">
    <property type="entry name" value="Shaggy-related protein kinase kappa"/>
    <property type="match status" value="1"/>
</dbReference>
<dbReference type="Gene3D" id="3.30.200.20">
    <property type="entry name" value="Phosphorylase Kinase, domain 1"/>
    <property type="match status" value="1"/>
</dbReference>
<dbReference type="Gene3D" id="1.10.510.10">
    <property type="entry name" value="Transferase(Phosphotransferase) domain 1"/>
    <property type="match status" value="1"/>
</dbReference>
<dbReference type="InterPro" id="IPR050591">
    <property type="entry name" value="GSK-3"/>
</dbReference>
<dbReference type="InterPro" id="IPR011009">
    <property type="entry name" value="Kinase-like_dom_sf"/>
</dbReference>
<dbReference type="InterPro" id="IPR000719">
    <property type="entry name" value="Prot_kinase_dom"/>
</dbReference>
<dbReference type="InterPro" id="IPR017441">
    <property type="entry name" value="Protein_kinase_ATP_BS"/>
</dbReference>
<dbReference type="InterPro" id="IPR008271">
    <property type="entry name" value="Ser/Thr_kinase_AS"/>
</dbReference>
<dbReference type="InterPro" id="IPR039192">
    <property type="entry name" value="STKc_GSK3"/>
</dbReference>
<dbReference type="PANTHER" id="PTHR24057">
    <property type="entry name" value="GLYCOGEN SYNTHASE KINASE-3 ALPHA"/>
    <property type="match status" value="1"/>
</dbReference>
<dbReference type="PANTHER" id="PTHR24057:SF5">
    <property type="entry name" value="SHAGGY-RELATED PROTEIN KINASE IOTA-RELATED"/>
    <property type="match status" value="1"/>
</dbReference>
<dbReference type="Pfam" id="PF00069">
    <property type="entry name" value="Pkinase"/>
    <property type="match status" value="1"/>
</dbReference>
<dbReference type="SMART" id="SM00220">
    <property type="entry name" value="S_TKc"/>
    <property type="match status" value="1"/>
</dbReference>
<dbReference type="SUPFAM" id="SSF56112">
    <property type="entry name" value="Protein kinase-like (PK-like)"/>
    <property type="match status" value="1"/>
</dbReference>
<dbReference type="PROSITE" id="PS00107">
    <property type="entry name" value="PROTEIN_KINASE_ATP"/>
    <property type="match status" value="1"/>
</dbReference>
<dbReference type="PROSITE" id="PS50011">
    <property type="entry name" value="PROTEIN_KINASE_DOM"/>
    <property type="match status" value="1"/>
</dbReference>
<dbReference type="PROSITE" id="PS00108">
    <property type="entry name" value="PROTEIN_KINASE_ST"/>
    <property type="match status" value="1"/>
</dbReference>